<proteinExistence type="inferred from homology"/>
<sequence>MKIIAKKDLFINDEIRVREVRLVGLEGEQLGIKPLSEAQSLADASNVDLVLIQPQAVPPVAKLMDYGKFKFEYQKKQKEQRKKQSVVTVKEVRLSPVIDKGDFETKLRNGRKFLEKGNKVKVSIRFKGRMITHKEIGAKVLADFAEATQDIAIIEQRAKMDGRQMFMQLAPISDKK</sequence>
<comment type="function">
    <text evidence="1">IF-3 binds to the 30S ribosomal subunit and shifts the equilibrium between 70S ribosomes and their 50S and 30S subunits in favor of the free subunits, thus enhancing the availability of 30S subunits on which protein synthesis initiation begins.</text>
</comment>
<comment type="subunit">
    <text evidence="1">Monomer.</text>
</comment>
<comment type="subcellular location">
    <subcellularLocation>
        <location evidence="1">Cytoplasm</location>
    </subcellularLocation>
</comment>
<comment type="similarity">
    <text evidence="1">Belongs to the IF-3 family.</text>
</comment>
<reference key="1">
    <citation type="journal article" date="2001" name="Proc. Natl. Acad. Sci. U.S.A.">
        <title>Complete genome sequence of an M1 strain of Streptococcus pyogenes.</title>
        <authorList>
            <person name="Ferretti J.J."/>
            <person name="McShan W.M."/>
            <person name="Ajdic D.J."/>
            <person name="Savic D.J."/>
            <person name="Savic G."/>
            <person name="Lyon K."/>
            <person name="Primeaux C."/>
            <person name="Sezate S."/>
            <person name="Suvorov A.N."/>
            <person name="Kenton S."/>
            <person name="Lai H.S."/>
            <person name="Lin S.P."/>
            <person name="Qian Y."/>
            <person name="Jia H.G."/>
            <person name="Najar F.Z."/>
            <person name="Ren Q."/>
            <person name="Zhu H."/>
            <person name="Song L."/>
            <person name="White J."/>
            <person name="Yuan X."/>
            <person name="Clifton S.W."/>
            <person name="Roe B.A."/>
            <person name="McLaughlin R.E."/>
        </authorList>
    </citation>
    <scope>NUCLEOTIDE SEQUENCE [LARGE SCALE GENOMIC DNA]</scope>
    <source>
        <strain>ATCC 700294 / SF370 / Serotype M1</strain>
    </source>
</reference>
<reference key="2">
    <citation type="journal article" date="2005" name="J. Infect. Dis.">
        <title>Evolutionary origin and emergence of a highly successful clone of serotype M1 group A Streptococcus involved multiple horizontal gene transfer events.</title>
        <authorList>
            <person name="Sumby P."/>
            <person name="Porcella S.F."/>
            <person name="Madrigal A.G."/>
            <person name="Barbian K.D."/>
            <person name="Virtaneva K."/>
            <person name="Ricklefs S.M."/>
            <person name="Sturdevant D.E."/>
            <person name="Graham M.R."/>
            <person name="Vuopio-Varkila J."/>
            <person name="Hoe N.P."/>
            <person name="Musser J.M."/>
        </authorList>
    </citation>
    <scope>NUCLEOTIDE SEQUENCE [LARGE SCALE GENOMIC DNA]</scope>
    <source>
        <strain>ATCC BAA-947 / MGAS5005 / Serotype M1</strain>
    </source>
</reference>
<accession>P65146</accession>
<accession>P58081</accession>
<accession>Q48ZI1</accession>
<organism>
    <name type="scientific">Streptococcus pyogenes serotype M1</name>
    <dbReference type="NCBI Taxonomy" id="301447"/>
    <lineage>
        <taxon>Bacteria</taxon>
        <taxon>Bacillati</taxon>
        <taxon>Bacillota</taxon>
        <taxon>Bacilli</taxon>
        <taxon>Lactobacillales</taxon>
        <taxon>Streptococcaceae</taxon>
        <taxon>Streptococcus</taxon>
    </lineage>
</organism>
<feature type="chain" id="PRO_0000177590" description="Translation initiation factor IF-3">
    <location>
        <begin position="1"/>
        <end position="176"/>
    </location>
</feature>
<keyword id="KW-0963">Cytoplasm</keyword>
<keyword id="KW-0396">Initiation factor</keyword>
<keyword id="KW-0648">Protein biosynthesis</keyword>
<keyword id="KW-1185">Reference proteome</keyword>
<name>IF3_STRP1</name>
<protein>
    <recommendedName>
        <fullName evidence="1">Translation initiation factor IF-3</fullName>
    </recommendedName>
</protein>
<gene>
    <name evidence="1" type="primary">infC</name>
    <name type="ordered locus">SPy_0804</name>
    <name type="ordered locus">M5005_Spy0619</name>
</gene>
<evidence type="ECO:0000255" key="1">
    <source>
        <dbReference type="HAMAP-Rule" id="MF_00080"/>
    </source>
</evidence>
<dbReference type="EMBL" id="AE004092">
    <property type="protein sequence ID" value="AAK33741.1"/>
    <property type="molecule type" value="Genomic_DNA"/>
</dbReference>
<dbReference type="EMBL" id="CP000017">
    <property type="protein sequence ID" value="AAZ51237.1"/>
    <property type="molecule type" value="Genomic_DNA"/>
</dbReference>
<dbReference type="RefSeq" id="NP_269020.1">
    <property type="nucleotide sequence ID" value="NC_002737.2"/>
</dbReference>
<dbReference type="SMR" id="P65146"/>
<dbReference type="PaxDb" id="1314-HKU360_00630"/>
<dbReference type="KEGG" id="spy:SPy_0804"/>
<dbReference type="KEGG" id="spz:M5005_Spy0619"/>
<dbReference type="PATRIC" id="fig|160490.10.peg.687"/>
<dbReference type="HOGENOM" id="CLU_054919_3_2_9"/>
<dbReference type="OMA" id="KCTVIFR"/>
<dbReference type="Proteomes" id="UP000000750">
    <property type="component" value="Chromosome"/>
</dbReference>
<dbReference type="GO" id="GO:0005829">
    <property type="term" value="C:cytosol"/>
    <property type="evidence" value="ECO:0007669"/>
    <property type="project" value="TreeGrafter"/>
</dbReference>
<dbReference type="GO" id="GO:0016020">
    <property type="term" value="C:membrane"/>
    <property type="evidence" value="ECO:0007669"/>
    <property type="project" value="TreeGrafter"/>
</dbReference>
<dbReference type="GO" id="GO:0043022">
    <property type="term" value="F:ribosome binding"/>
    <property type="evidence" value="ECO:0007669"/>
    <property type="project" value="TreeGrafter"/>
</dbReference>
<dbReference type="GO" id="GO:0003743">
    <property type="term" value="F:translation initiation factor activity"/>
    <property type="evidence" value="ECO:0007669"/>
    <property type="project" value="UniProtKB-UniRule"/>
</dbReference>
<dbReference type="GO" id="GO:0032790">
    <property type="term" value="P:ribosome disassembly"/>
    <property type="evidence" value="ECO:0007669"/>
    <property type="project" value="TreeGrafter"/>
</dbReference>
<dbReference type="FunFam" id="3.10.20.80:FF:000001">
    <property type="entry name" value="Translation initiation factor IF-3"/>
    <property type="match status" value="1"/>
</dbReference>
<dbReference type="FunFam" id="3.30.110.10:FF:000001">
    <property type="entry name" value="Translation initiation factor IF-3"/>
    <property type="match status" value="1"/>
</dbReference>
<dbReference type="Gene3D" id="3.30.110.10">
    <property type="entry name" value="Translation initiation factor 3 (IF-3), C-terminal domain"/>
    <property type="match status" value="1"/>
</dbReference>
<dbReference type="Gene3D" id="3.10.20.80">
    <property type="entry name" value="Translation initiation factor 3 (IF-3), N-terminal domain"/>
    <property type="match status" value="1"/>
</dbReference>
<dbReference type="HAMAP" id="MF_00080">
    <property type="entry name" value="IF_3"/>
    <property type="match status" value="1"/>
</dbReference>
<dbReference type="InterPro" id="IPR036788">
    <property type="entry name" value="T_IF-3_C_sf"/>
</dbReference>
<dbReference type="InterPro" id="IPR036787">
    <property type="entry name" value="T_IF-3_N_sf"/>
</dbReference>
<dbReference type="InterPro" id="IPR019813">
    <property type="entry name" value="Translation_initiation_fac3_CS"/>
</dbReference>
<dbReference type="InterPro" id="IPR001288">
    <property type="entry name" value="Translation_initiation_fac_3"/>
</dbReference>
<dbReference type="InterPro" id="IPR019815">
    <property type="entry name" value="Translation_initiation_fac_3_C"/>
</dbReference>
<dbReference type="InterPro" id="IPR019814">
    <property type="entry name" value="Translation_initiation_fac_3_N"/>
</dbReference>
<dbReference type="NCBIfam" id="TIGR00168">
    <property type="entry name" value="infC"/>
    <property type="match status" value="1"/>
</dbReference>
<dbReference type="PANTHER" id="PTHR10938">
    <property type="entry name" value="TRANSLATION INITIATION FACTOR IF-3"/>
    <property type="match status" value="1"/>
</dbReference>
<dbReference type="PANTHER" id="PTHR10938:SF0">
    <property type="entry name" value="TRANSLATION INITIATION FACTOR IF-3, MITOCHONDRIAL"/>
    <property type="match status" value="1"/>
</dbReference>
<dbReference type="Pfam" id="PF00707">
    <property type="entry name" value="IF3_C"/>
    <property type="match status" value="1"/>
</dbReference>
<dbReference type="Pfam" id="PF05198">
    <property type="entry name" value="IF3_N"/>
    <property type="match status" value="1"/>
</dbReference>
<dbReference type="SUPFAM" id="SSF55200">
    <property type="entry name" value="Translation initiation factor IF3, C-terminal domain"/>
    <property type="match status" value="1"/>
</dbReference>
<dbReference type="SUPFAM" id="SSF54364">
    <property type="entry name" value="Translation initiation factor IF3, N-terminal domain"/>
    <property type="match status" value="1"/>
</dbReference>
<dbReference type="PROSITE" id="PS00938">
    <property type="entry name" value="IF3"/>
    <property type="match status" value="1"/>
</dbReference>